<gene>
    <name type="primary">asa1</name>
    <name type="ORF">Pc21g05520</name>
</gene>
<comment type="function">
    <text evidence="1">Component of the ASTRA complex involved in chromatin remodeling.</text>
</comment>
<comment type="subunit">
    <text evidence="1">Component of the ASTRA chromatin remodeling machinery complex.</text>
</comment>
<comment type="subcellular location">
    <subcellularLocation>
        <location evidence="1">Nucleus</location>
    </subcellularLocation>
</comment>
<comment type="similarity">
    <text evidence="3">Belongs to the WD repeat ASA1 family.</text>
</comment>
<sequence>MDTKSVQVQSPATPVYILRGHASPVHALHIYSQNLRLVSGDANGWIVVWDLVTKRPVTAWKAHEGAVLEARGFDVGSGATEIYTHGRDHKLCVWKLRPEDETFLNKTLPVDATESAQPGSKTQPWLLHSLPVNALNFCAFSMAFVNPDGLPAFPSQSGRPENTLFAVPNALDSGGVDIFHLPSERRISTIPSEQSPKTGMLMAVNLFISPSGDLYVASAYEDGHVMVFVHRGALKSASFEREYISNNPLKWDKLYAGRPHSQPVLSLDVAPSHGYFISSSADALIVKHPIPNTGSAGYIPTAGYKEESPLKIVNTKHSGQQGLRIRSDEKVFATAGWDSRIRVYSGKTMKELAVLKWHKDGCYSIAFGDTESMSSLVSPSSESAKQEPRDADQGAAGQTTVDGRNYSLATVQQQRNQKVQQTHWLAAGSKDGKISLWDIY</sequence>
<protein>
    <recommendedName>
        <fullName>ASTRA-associated protein 1</fullName>
    </recommendedName>
</protein>
<organism>
    <name type="scientific">Penicillium rubens (strain ATCC 28089 / DSM 1075 / NRRL 1951 / Wisconsin 54-1255)</name>
    <name type="common">Penicillium chrysogenum</name>
    <dbReference type="NCBI Taxonomy" id="500485"/>
    <lineage>
        <taxon>Eukaryota</taxon>
        <taxon>Fungi</taxon>
        <taxon>Dikarya</taxon>
        <taxon>Ascomycota</taxon>
        <taxon>Pezizomycotina</taxon>
        <taxon>Eurotiomycetes</taxon>
        <taxon>Eurotiomycetidae</taxon>
        <taxon>Eurotiales</taxon>
        <taxon>Aspergillaceae</taxon>
        <taxon>Penicillium</taxon>
        <taxon>Penicillium chrysogenum species complex</taxon>
    </lineage>
</organism>
<evidence type="ECO:0000250" key="1"/>
<evidence type="ECO:0000256" key="2">
    <source>
        <dbReference type="SAM" id="MobiDB-lite"/>
    </source>
</evidence>
<evidence type="ECO:0000305" key="3"/>
<accession>B6HHJ8</accession>
<name>ASA1_PENRW</name>
<feature type="chain" id="PRO_0000402216" description="ASTRA-associated protein 1">
    <location>
        <begin position="1"/>
        <end position="440"/>
    </location>
</feature>
<feature type="repeat" description="WD 1">
    <location>
        <begin position="20"/>
        <end position="59"/>
    </location>
</feature>
<feature type="repeat" description="WD 2">
    <location>
        <begin position="62"/>
        <end position="104"/>
    </location>
</feature>
<feature type="repeat" description="WD 3">
    <location>
        <begin position="196"/>
        <end position="238"/>
    </location>
</feature>
<feature type="repeat" description="WD 4">
    <location>
        <begin position="259"/>
        <end position="300"/>
    </location>
</feature>
<feature type="repeat" description="WD 5">
    <location>
        <begin position="315"/>
        <end position="354"/>
    </location>
</feature>
<feature type="repeat" description="WD 6">
    <location>
        <begin position="357"/>
        <end position="399"/>
    </location>
</feature>
<feature type="repeat" description="WD 7">
    <location>
        <begin position="403"/>
        <end position="440"/>
    </location>
</feature>
<feature type="region of interest" description="Disordered" evidence="2">
    <location>
        <begin position="376"/>
        <end position="399"/>
    </location>
</feature>
<dbReference type="EMBL" id="AM920436">
    <property type="protein sequence ID" value="CAP95449.1"/>
    <property type="molecule type" value="Genomic_DNA"/>
</dbReference>
<dbReference type="RefSeq" id="XP_002567598.1">
    <property type="nucleotide sequence ID" value="XM_002567552.1"/>
</dbReference>
<dbReference type="STRING" id="500485.B6HHJ8"/>
<dbReference type="GeneID" id="8313849"/>
<dbReference type="KEGG" id="pcs:N7525_007032"/>
<dbReference type="VEuPathDB" id="FungiDB:PCH_Pc21g05520"/>
<dbReference type="eggNOG" id="KOG0322">
    <property type="taxonomic scope" value="Eukaryota"/>
</dbReference>
<dbReference type="HOGENOM" id="CLU_041940_0_1_1"/>
<dbReference type="OMA" id="YQRQSMQ"/>
<dbReference type="OrthoDB" id="7668193at2759"/>
<dbReference type="BioCyc" id="PCHR:PC21G05520-MONOMER"/>
<dbReference type="Proteomes" id="UP000000724">
    <property type="component" value="Contig Pc00c21"/>
</dbReference>
<dbReference type="GO" id="GO:0005634">
    <property type="term" value="C:nucleus"/>
    <property type="evidence" value="ECO:0007669"/>
    <property type="project" value="UniProtKB-SubCell"/>
</dbReference>
<dbReference type="GO" id="GO:0006325">
    <property type="term" value="P:chromatin organization"/>
    <property type="evidence" value="ECO:0007669"/>
    <property type="project" value="UniProtKB-KW"/>
</dbReference>
<dbReference type="Gene3D" id="2.130.10.10">
    <property type="entry name" value="YVTN repeat-like/Quinoprotein amine dehydrogenase"/>
    <property type="match status" value="3"/>
</dbReference>
<dbReference type="InterPro" id="IPR015943">
    <property type="entry name" value="WD40/YVTN_repeat-like_dom_sf"/>
</dbReference>
<dbReference type="InterPro" id="IPR019775">
    <property type="entry name" value="WD40_repeat_CS"/>
</dbReference>
<dbReference type="InterPro" id="IPR036322">
    <property type="entry name" value="WD40_repeat_dom_sf"/>
</dbReference>
<dbReference type="InterPro" id="IPR001680">
    <property type="entry name" value="WD40_rpt"/>
</dbReference>
<dbReference type="PANTHER" id="PTHR19854:SF1">
    <property type="entry name" value="GUANINE NUCLEOTIDE-BINDING PROTEIN SUBUNIT BETA-LIKE PROTEIN 1"/>
    <property type="match status" value="1"/>
</dbReference>
<dbReference type="PANTHER" id="PTHR19854">
    <property type="entry name" value="TRANSDUCIN BETA-LIKE 3"/>
    <property type="match status" value="1"/>
</dbReference>
<dbReference type="Pfam" id="PF00400">
    <property type="entry name" value="WD40"/>
    <property type="match status" value="2"/>
</dbReference>
<dbReference type="SMART" id="SM00320">
    <property type="entry name" value="WD40"/>
    <property type="match status" value="6"/>
</dbReference>
<dbReference type="SUPFAM" id="SSF50978">
    <property type="entry name" value="WD40 repeat-like"/>
    <property type="match status" value="1"/>
</dbReference>
<dbReference type="PROSITE" id="PS00678">
    <property type="entry name" value="WD_REPEATS_1"/>
    <property type="match status" value="2"/>
</dbReference>
<dbReference type="PROSITE" id="PS50082">
    <property type="entry name" value="WD_REPEATS_2"/>
    <property type="match status" value="2"/>
</dbReference>
<dbReference type="PROSITE" id="PS50294">
    <property type="entry name" value="WD_REPEATS_REGION"/>
    <property type="match status" value="2"/>
</dbReference>
<proteinExistence type="inferred from homology"/>
<reference key="1">
    <citation type="journal article" date="2008" name="Nat. Biotechnol.">
        <title>Genome sequencing and analysis of the filamentous fungus Penicillium chrysogenum.</title>
        <authorList>
            <person name="van den Berg M.A."/>
            <person name="Albang R."/>
            <person name="Albermann K."/>
            <person name="Badger J.H."/>
            <person name="Daran J.-M."/>
            <person name="Driessen A.J.M."/>
            <person name="Garcia-Estrada C."/>
            <person name="Fedorova N.D."/>
            <person name="Harris D.M."/>
            <person name="Heijne W.H.M."/>
            <person name="Joardar V.S."/>
            <person name="Kiel J.A.K.W."/>
            <person name="Kovalchuk A."/>
            <person name="Martin J.F."/>
            <person name="Nierman W.C."/>
            <person name="Nijland J.G."/>
            <person name="Pronk J.T."/>
            <person name="Roubos J.A."/>
            <person name="van der Klei I.J."/>
            <person name="van Peij N.N.M.E."/>
            <person name="Veenhuis M."/>
            <person name="von Doehren H."/>
            <person name="Wagner C."/>
            <person name="Wortman J.R."/>
            <person name="Bovenberg R.A.L."/>
        </authorList>
    </citation>
    <scope>NUCLEOTIDE SEQUENCE [LARGE SCALE GENOMIC DNA]</scope>
    <source>
        <strain>ATCC 28089 / DSM 1075 / NRRL 1951 / Wisconsin 54-1255</strain>
    </source>
</reference>
<keyword id="KW-0156">Chromatin regulator</keyword>
<keyword id="KW-0539">Nucleus</keyword>
<keyword id="KW-1185">Reference proteome</keyword>
<keyword id="KW-0677">Repeat</keyword>
<keyword id="KW-0853">WD repeat</keyword>